<evidence type="ECO:0000255" key="1">
    <source>
        <dbReference type="HAMAP-Rule" id="MF_00328"/>
    </source>
</evidence>
<gene>
    <name evidence="1" type="primary">gmk</name>
    <name type="ordered locus">CA_C1718</name>
</gene>
<comment type="function">
    <text evidence="1">Essential for recycling GMP and indirectly, cGMP.</text>
</comment>
<comment type="catalytic activity">
    <reaction evidence="1">
        <text>GMP + ATP = GDP + ADP</text>
        <dbReference type="Rhea" id="RHEA:20780"/>
        <dbReference type="ChEBI" id="CHEBI:30616"/>
        <dbReference type="ChEBI" id="CHEBI:58115"/>
        <dbReference type="ChEBI" id="CHEBI:58189"/>
        <dbReference type="ChEBI" id="CHEBI:456216"/>
        <dbReference type="EC" id="2.7.4.8"/>
    </reaction>
</comment>
<comment type="subcellular location">
    <subcellularLocation>
        <location evidence="1">Cytoplasm</location>
    </subcellularLocation>
</comment>
<comment type="similarity">
    <text evidence="1">Belongs to the guanylate kinase family.</text>
</comment>
<protein>
    <recommendedName>
        <fullName evidence="1">Guanylate kinase</fullName>
        <ecNumber evidence="1">2.7.4.8</ecNumber>
    </recommendedName>
    <alternativeName>
        <fullName evidence="1">GMP kinase</fullName>
    </alternativeName>
</protein>
<proteinExistence type="inferred from homology"/>
<organism>
    <name type="scientific">Clostridium acetobutylicum (strain ATCC 824 / DSM 792 / JCM 1419 / IAM 19013 / LMG 5710 / NBRC 13948 / NRRL B-527 / VKM B-1787 / 2291 / W)</name>
    <dbReference type="NCBI Taxonomy" id="272562"/>
    <lineage>
        <taxon>Bacteria</taxon>
        <taxon>Bacillati</taxon>
        <taxon>Bacillota</taxon>
        <taxon>Clostridia</taxon>
        <taxon>Eubacteriales</taxon>
        <taxon>Clostridiaceae</taxon>
        <taxon>Clostridium</taxon>
    </lineage>
</organism>
<name>KGUA_CLOAB</name>
<sequence length="209" mass="23771">MSKKGLLIVISGPSGAGKGTICKALMKEQQFWLSVSATTREPREKEVEGKSYYFLTVDEFKSKISEDGFLEYAEVYGNYYGTPKKSVCEKIDNGENVILEIDIQGALKVKENYPEGVFIFILPPSMEELKKRIIGRGSETEKSLMTRFKSAYKEINYVSKYNYAIINDTVENAVTKINSIIVAEKCRVDRIKDNIIDSKEGKIHEQFYD</sequence>
<accession>Q97ID0</accession>
<dbReference type="EC" id="2.7.4.8" evidence="1"/>
<dbReference type="EMBL" id="AE001437">
    <property type="protein sequence ID" value="AAK79684.1"/>
    <property type="molecule type" value="Genomic_DNA"/>
</dbReference>
<dbReference type="PIR" id="A97112">
    <property type="entry name" value="A97112"/>
</dbReference>
<dbReference type="RefSeq" id="NP_348344.1">
    <property type="nucleotide sequence ID" value="NC_003030.1"/>
</dbReference>
<dbReference type="RefSeq" id="WP_010965025.1">
    <property type="nucleotide sequence ID" value="NC_003030.1"/>
</dbReference>
<dbReference type="SMR" id="Q97ID0"/>
<dbReference type="STRING" id="272562.CA_C1718"/>
<dbReference type="GeneID" id="44998213"/>
<dbReference type="KEGG" id="cac:CA_C1718"/>
<dbReference type="PATRIC" id="fig|272562.8.peg.1920"/>
<dbReference type="eggNOG" id="COG0194">
    <property type="taxonomic scope" value="Bacteria"/>
</dbReference>
<dbReference type="HOGENOM" id="CLU_001715_1_2_9"/>
<dbReference type="OrthoDB" id="9808150at2"/>
<dbReference type="Proteomes" id="UP000000814">
    <property type="component" value="Chromosome"/>
</dbReference>
<dbReference type="GO" id="GO:0005829">
    <property type="term" value="C:cytosol"/>
    <property type="evidence" value="ECO:0007669"/>
    <property type="project" value="TreeGrafter"/>
</dbReference>
<dbReference type="GO" id="GO:0005524">
    <property type="term" value="F:ATP binding"/>
    <property type="evidence" value="ECO:0007669"/>
    <property type="project" value="UniProtKB-UniRule"/>
</dbReference>
<dbReference type="GO" id="GO:0004385">
    <property type="term" value="F:guanylate kinase activity"/>
    <property type="evidence" value="ECO:0007669"/>
    <property type="project" value="UniProtKB-UniRule"/>
</dbReference>
<dbReference type="CDD" id="cd00071">
    <property type="entry name" value="GMPK"/>
    <property type="match status" value="1"/>
</dbReference>
<dbReference type="FunFam" id="3.30.63.10:FF:000005">
    <property type="entry name" value="Guanylate kinase"/>
    <property type="match status" value="1"/>
</dbReference>
<dbReference type="FunFam" id="3.40.50.300:FF:000855">
    <property type="entry name" value="Guanylate kinase"/>
    <property type="match status" value="1"/>
</dbReference>
<dbReference type="Gene3D" id="3.30.63.10">
    <property type="entry name" value="Guanylate Kinase phosphate binding domain"/>
    <property type="match status" value="1"/>
</dbReference>
<dbReference type="Gene3D" id="3.40.50.300">
    <property type="entry name" value="P-loop containing nucleotide triphosphate hydrolases"/>
    <property type="match status" value="1"/>
</dbReference>
<dbReference type="HAMAP" id="MF_00328">
    <property type="entry name" value="Guanylate_kinase"/>
    <property type="match status" value="1"/>
</dbReference>
<dbReference type="InterPro" id="IPR008145">
    <property type="entry name" value="GK/Ca_channel_bsu"/>
</dbReference>
<dbReference type="InterPro" id="IPR008144">
    <property type="entry name" value="Guanylate_kin-like_dom"/>
</dbReference>
<dbReference type="InterPro" id="IPR017665">
    <property type="entry name" value="Guanylate_kinase"/>
</dbReference>
<dbReference type="InterPro" id="IPR020590">
    <property type="entry name" value="Guanylate_kinase_CS"/>
</dbReference>
<dbReference type="InterPro" id="IPR027417">
    <property type="entry name" value="P-loop_NTPase"/>
</dbReference>
<dbReference type="NCBIfam" id="TIGR03263">
    <property type="entry name" value="guanyl_kin"/>
    <property type="match status" value="1"/>
</dbReference>
<dbReference type="PANTHER" id="PTHR23117:SF13">
    <property type="entry name" value="GUANYLATE KINASE"/>
    <property type="match status" value="1"/>
</dbReference>
<dbReference type="PANTHER" id="PTHR23117">
    <property type="entry name" value="GUANYLATE KINASE-RELATED"/>
    <property type="match status" value="1"/>
</dbReference>
<dbReference type="Pfam" id="PF00625">
    <property type="entry name" value="Guanylate_kin"/>
    <property type="match status" value="1"/>
</dbReference>
<dbReference type="SMART" id="SM00072">
    <property type="entry name" value="GuKc"/>
    <property type="match status" value="1"/>
</dbReference>
<dbReference type="SUPFAM" id="SSF52540">
    <property type="entry name" value="P-loop containing nucleoside triphosphate hydrolases"/>
    <property type="match status" value="1"/>
</dbReference>
<dbReference type="PROSITE" id="PS00856">
    <property type="entry name" value="GUANYLATE_KINASE_1"/>
    <property type="match status" value="1"/>
</dbReference>
<dbReference type="PROSITE" id="PS50052">
    <property type="entry name" value="GUANYLATE_KINASE_2"/>
    <property type="match status" value="1"/>
</dbReference>
<feature type="chain" id="PRO_0000170524" description="Guanylate kinase">
    <location>
        <begin position="1"/>
        <end position="209"/>
    </location>
</feature>
<feature type="domain" description="Guanylate kinase-like" evidence="1">
    <location>
        <begin position="5"/>
        <end position="182"/>
    </location>
</feature>
<feature type="binding site" evidence="1">
    <location>
        <begin position="12"/>
        <end position="19"/>
    </location>
    <ligand>
        <name>ATP</name>
        <dbReference type="ChEBI" id="CHEBI:30616"/>
    </ligand>
</feature>
<keyword id="KW-0067">ATP-binding</keyword>
<keyword id="KW-0963">Cytoplasm</keyword>
<keyword id="KW-0418">Kinase</keyword>
<keyword id="KW-0547">Nucleotide-binding</keyword>
<keyword id="KW-1185">Reference proteome</keyword>
<keyword id="KW-0808">Transferase</keyword>
<reference key="1">
    <citation type="journal article" date="2001" name="J. Bacteriol.">
        <title>Genome sequence and comparative analysis of the solvent-producing bacterium Clostridium acetobutylicum.</title>
        <authorList>
            <person name="Noelling J."/>
            <person name="Breton G."/>
            <person name="Omelchenko M.V."/>
            <person name="Makarova K.S."/>
            <person name="Zeng Q."/>
            <person name="Gibson R."/>
            <person name="Lee H.M."/>
            <person name="Dubois J."/>
            <person name="Qiu D."/>
            <person name="Hitti J."/>
            <person name="Wolf Y.I."/>
            <person name="Tatusov R.L."/>
            <person name="Sabathe F."/>
            <person name="Doucette-Stamm L.A."/>
            <person name="Soucaille P."/>
            <person name="Daly M.J."/>
            <person name="Bennett G.N."/>
            <person name="Koonin E.V."/>
            <person name="Smith D.R."/>
        </authorList>
    </citation>
    <scope>NUCLEOTIDE SEQUENCE [LARGE SCALE GENOMIC DNA]</scope>
    <source>
        <strain>ATCC 824 / DSM 792 / JCM 1419 / IAM 19013 / LMG 5710 / NBRC 13948 / NRRL B-527 / VKM B-1787 / 2291 / W</strain>
    </source>
</reference>